<evidence type="ECO:0000250" key="1"/>
<evidence type="ECO:0000255" key="2">
    <source>
        <dbReference type="HAMAP-Rule" id="MF_00492"/>
    </source>
</evidence>
<organism>
    <name type="scientific">Haemophilus ducreyi (strain 35000HP / ATCC 700724)</name>
    <dbReference type="NCBI Taxonomy" id="233412"/>
    <lineage>
        <taxon>Bacteria</taxon>
        <taxon>Pseudomonadati</taxon>
        <taxon>Pseudomonadota</taxon>
        <taxon>Gammaproteobacteria</taxon>
        <taxon>Pasteurellales</taxon>
        <taxon>Pasteurellaceae</taxon>
        <taxon>Haemophilus</taxon>
    </lineage>
</organism>
<sequence length="315" mass="34928">MNQLDALREMTVVVADTGDIEAIRQYQPQDATTNPSLILSASALSQYAPLIDDAIRYAKSKSGNKAQQLVDAEDKLAVNIGLEILKIVPGRISTEVDARFSYDTEKTIAKARKLIGLYNEAGVANNRILIKIAATWQGIRAAEILEKEGINCNLTLLFSQAQARACAEAGVYLISPFVGRILDWYKANEKKEYAAAEDPGVISVTAIYNYYKQYNYKTIVMGASFRNVGEITEIAGCDRLTIAPPLLKALAESNETLVRKLDYQGEILDRPAPLSEAEFYWQHNQDPMAVDKLAEGIRKFAIDQEKLEEMLSAKL</sequence>
<keyword id="KW-0963">Cytoplasm</keyword>
<keyword id="KW-0570">Pentose shunt</keyword>
<keyword id="KW-1185">Reference proteome</keyword>
<keyword id="KW-0704">Schiff base</keyword>
<keyword id="KW-0808">Transferase</keyword>
<accession>Q7VP02</accession>
<protein>
    <recommendedName>
        <fullName evidence="2">Transaldolase</fullName>
        <ecNumber evidence="2">2.2.1.2</ecNumber>
    </recommendedName>
</protein>
<reference key="1">
    <citation type="submission" date="2003-06" db="EMBL/GenBank/DDBJ databases">
        <title>The complete genome sequence of Haemophilus ducreyi.</title>
        <authorList>
            <person name="Munson R.S. Jr."/>
            <person name="Ray W.C."/>
            <person name="Mahairas G."/>
            <person name="Sabo P."/>
            <person name="Mungur R."/>
            <person name="Johnson L."/>
            <person name="Nguyen D."/>
            <person name="Wang J."/>
            <person name="Forst C."/>
            <person name="Hood L."/>
        </authorList>
    </citation>
    <scope>NUCLEOTIDE SEQUENCE [LARGE SCALE GENOMIC DNA]</scope>
    <source>
        <strain>35000HP / ATCC 700724</strain>
    </source>
</reference>
<name>TAL_HAEDU</name>
<proteinExistence type="inferred from homology"/>
<feature type="chain" id="PRO_0000173598" description="Transaldolase">
    <location>
        <begin position="1"/>
        <end position="315"/>
    </location>
</feature>
<feature type="active site" description="Schiff-base intermediate with substrate" evidence="2">
    <location>
        <position position="131"/>
    </location>
</feature>
<gene>
    <name evidence="2" type="primary">tal</name>
    <name type="ordered locus">HD_0310</name>
</gene>
<comment type="function">
    <text evidence="2">Transaldolase is important for the balance of metabolites in the pentose-phosphate pathway.</text>
</comment>
<comment type="catalytic activity">
    <reaction evidence="2">
        <text>D-sedoheptulose 7-phosphate + D-glyceraldehyde 3-phosphate = D-erythrose 4-phosphate + beta-D-fructose 6-phosphate</text>
        <dbReference type="Rhea" id="RHEA:17053"/>
        <dbReference type="ChEBI" id="CHEBI:16897"/>
        <dbReference type="ChEBI" id="CHEBI:57483"/>
        <dbReference type="ChEBI" id="CHEBI:57634"/>
        <dbReference type="ChEBI" id="CHEBI:59776"/>
        <dbReference type="EC" id="2.2.1.2"/>
    </reaction>
</comment>
<comment type="pathway">
    <text evidence="2">Carbohydrate degradation; pentose phosphate pathway; D-glyceraldehyde 3-phosphate and beta-D-fructose 6-phosphate from D-ribose 5-phosphate and D-xylulose 5-phosphate (non-oxidative stage): step 2/3.</text>
</comment>
<comment type="subunit">
    <text evidence="1">Homodimer.</text>
</comment>
<comment type="subcellular location">
    <subcellularLocation>
        <location evidence="2">Cytoplasm</location>
    </subcellularLocation>
</comment>
<comment type="similarity">
    <text evidence="2">Belongs to the transaldolase family. Type 1 subfamily.</text>
</comment>
<dbReference type="EC" id="2.2.1.2" evidence="2"/>
<dbReference type="EMBL" id="AE017143">
    <property type="protein sequence ID" value="AAP95288.1"/>
    <property type="molecule type" value="Genomic_DNA"/>
</dbReference>
<dbReference type="RefSeq" id="WP_010944341.1">
    <property type="nucleotide sequence ID" value="NC_002940.2"/>
</dbReference>
<dbReference type="SMR" id="Q7VP02"/>
<dbReference type="STRING" id="233412.HD_0310"/>
<dbReference type="KEGG" id="hdu:HD_0310"/>
<dbReference type="eggNOG" id="COG0176">
    <property type="taxonomic scope" value="Bacteria"/>
</dbReference>
<dbReference type="HOGENOM" id="CLU_047470_0_1_6"/>
<dbReference type="OrthoDB" id="9809101at2"/>
<dbReference type="UniPathway" id="UPA00115">
    <property type="reaction ID" value="UER00414"/>
</dbReference>
<dbReference type="Proteomes" id="UP000001022">
    <property type="component" value="Chromosome"/>
</dbReference>
<dbReference type="GO" id="GO:0005829">
    <property type="term" value="C:cytosol"/>
    <property type="evidence" value="ECO:0007669"/>
    <property type="project" value="TreeGrafter"/>
</dbReference>
<dbReference type="GO" id="GO:0004801">
    <property type="term" value="F:transaldolase activity"/>
    <property type="evidence" value="ECO:0000250"/>
    <property type="project" value="UniProtKB"/>
</dbReference>
<dbReference type="GO" id="GO:0005975">
    <property type="term" value="P:carbohydrate metabolic process"/>
    <property type="evidence" value="ECO:0007669"/>
    <property type="project" value="InterPro"/>
</dbReference>
<dbReference type="GO" id="GO:0006098">
    <property type="term" value="P:pentose-phosphate shunt"/>
    <property type="evidence" value="ECO:0007669"/>
    <property type="project" value="UniProtKB-UniRule"/>
</dbReference>
<dbReference type="CDD" id="cd00957">
    <property type="entry name" value="Transaldolase_TalAB"/>
    <property type="match status" value="1"/>
</dbReference>
<dbReference type="FunFam" id="3.20.20.70:FF:000002">
    <property type="entry name" value="Transaldolase"/>
    <property type="match status" value="1"/>
</dbReference>
<dbReference type="Gene3D" id="3.20.20.70">
    <property type="entry name" value="Aldolase class I"/>
    <property type="match status" value="1"/>
</dbReference>
<dbReference type="HAMAP" id="MF_00492">
    <property type="entry name" value="Transaldolase_1"/>
    <property type="match status" value="1"/>
</dbReference>
<dbReference type="InterPro" id="IPR013785">
    <property type="entry name" value="Aldolase_TIM"/>
</dbReference>
<dbReference type="InterPro" id="IPR001585">
    <property type="entry name" value="TAL/FSA"/>
</dbReference>
<dbReference type="InterPro" id="IPR004730">
    <property type="entry name" value="Transaldolase_1"/>
</dbReference>
<dbReference type="InterPro" id="IPR018225">
    <property type="entry name" value="Transaldolase_AS"/>
</dbReference>
<dbReference type="NCBIfam" id="NF009001">
    <property type="entry name" value="PRK12346.1"/>
    <property type="match status" value="1"/>
</dbReference>
<dbReference type="NCBIfam" id="TIGR00874">
    <property type="entry name" value="talAB"/>
    <property type="match status" value="1"/>
</dbReference>
<dbReference type="PANTHER" id="PTHR10683">
    <property type="entry name" value="TRANSALDOLASE"/>
    <property type="match status" value="1"/>
</dbReference>
<dbReference type="PANTHER" id="PTHR10683:SF18">
    <property type="entry name" value="TRANSALDOLASE"/>
    <property type="match status" value="1"/>
</dbReference>
<dbReference type="Pfam" id="PF00923">
    <property type="entry name" value="TAL_FSA"/>
    <property type="match status" value="1"/>
</dbReference>
<dbReference type="SUPFAM" id="SSF51569">
    <property type="entry name" value="Aldolase"/>
    <property type="match status" value="1"/>
</dbReference>
<dbReference type="PROSITE" id="PS01054">
    <property type="entry name" value="TRANSALDOLASE_1"/>
    <property type="match status" value="1"/>
</dbReference>
<dbReference type="PROSITE" id="PS00958">
    <property type="entry name" value="TRANSALDOLASE_2"/>
    <property type="match status" value="1"/>
</dbReference>